<geneLocation type="mitochondrion"/>
<reference key="1">
    <citation type="journal article" date="1992" name="Mol. Biol. Evol.">
        <title>Mitochondrial DNA phylogeny of the Old-World monkey tribe Papionini.</title>
        <authorList>
            <person name="Disotell T.R."/>
            <person name="Honeycutt R.L."/>
            <person name="Ruvolo M."/>
        </authorList>
    </citation>
    <scope>NUCLEOTIDE SEQUENCE [GENOMIC DNA]</scope>
</reference>
<gene>
    <name type="primary">MT-CO2</name>
    <name type="synonym">COII</name>
    <name type="synonym">COX2</name>
    <name type="synonym">COXII</name>
    <name type="synonym">MTCO2</name>
</gene>
<feature type="chain" id="PRO_0000183627" description="Cytochrome c oxidase subunit 2">
    <location>
        <begin position="1"/>
        <end position="227"/>
    </location>
</feature>
<feature type="topological domain" description="Mitochondrial intermembrane" evidence="3">
    <location>
        <begin position="1"/>
        <end position="14"/>
    </location>
</feature>
<feature type="transmembrane region" description="Helical; Name=I" evidence="3">
    <location>
        <begin position="15"/>
        <end position="45"/>
    </location>
</feature>
<feature type="topological domain" description="Mitochondrial matrix" evidence="3">
    <location>
        <begin position="46"/>
        <end position="59"/>
    </location>
</feature>
<feature type="transmembrane region" description="Helical; Name=II" evidence="3">
    <location>
        <begin position="60"/>
        <end position="87"/>
    </location>
</feature>
<feature type="topological domain" description="Mitochondrial intermembrane" evidence="3">
    <location>
        <begin position="88"/>
        <end position="227"/>
    </location>
</feature>
<feature type="binding site" evidence="3">
    <location>
        <position position="161"/>
    </location>
    <ligand>
        <name>Cu cation</name>
        <dbReference type="ChEBI" id="CHEBI:23378"/>
        <label>A1</label>
    </ligand>
</feature>
<feature type="binding site" evidence="3">
    <location>
        <position position="196"/>
    </location>
    <ligand>
        <name>Cu cation</name>
        <dbReference type="ChEBI" id="CHEBI:23378"/>
        <label>A1</label>
    </ligand>
</feature>
<feature type="binding site" evidence="3">
    <location>
        <position position="196"/>
    </location>
    <ligand>
        <name>Cu cation</name>
        <dbReference type="ChEBI" id="CHEBI:23378"/>
        <label>A2</label>
    </ligand>
</feature>
<feature type="binding site" evidence="3">
    <location>
        <position position="198"/>
    </location>
    <ligand>
        <name>Cu cation</name>
        <dbReference type="ChEBI" id="CHEBI:23378"/>
        <label>A2</label>
    </ligand>
</feature>
<feature type="binding site" evidence="3">
    <location>
        <position position="198"/>
    </location>
    <ligand>
        <name>Mg(2+)</name>
        <dbReference type="ChEBI" id="CHEBI:18420"/>
        <note>ligand shared with MT-CO1</note>
    </ligand>
</feature>
<feature type="binding site" evidence="3">
    <location>
        <position position="200"/>
    </location>
    <ligand>
        <name>Cu cation</name>
        <dbReference type="ChEBI" id="CHEBI:23378"/>
        <label>A1</label>
    </ligand>
</feature>
<feature type="binding site" evidence="3">
    <location>
        <position position="200"/>
    </location>
    <ligand>
        <name>Cu cation</name>
        <dbReference type="ChEBI" id="CHEBI:23378"/>
        <label>A2</label>
    </ligand>
</feature>
<feature type="binding site" evidence="3">
    <location>
        <position position="204"/>
    </location>
    <ligand>
        <name>Cu cation</name>
        <dbReference type="ChEBI" id="CHEBI:23378"/>
        <label>A2</label>
    </ligand>
</feature>
<feature type="binding site" evidence="3">
    <location>
        <position position="207"/>
    </location>
    <ligand>
        <name>Cu cation</name>
        <dbReference type="ChEBI" id="CHEBI:23378"/>
        <label>A1</label>
    </ligand>
</feature>
<proteinExistence type="inferred from homology"/>
<dbReference type="EC" id="7.1.1.9"/>
<dbReference type="EMBL" id="M74005">
    <property type="protein sequence ID" value="AAA31891.1"/>
    <property type="molecule type" value="Genomic_DNA"/>
</dbReference>
<dbReference type="PIR" id="I84424">
    <property type="entry name" value="I84424"/>
</dbReference>
<dbReference type="SMR" id="P98038"/>
<dbReference type="FunCoup" id="P98038">
    <property type="interactions" value="202"/>
</dbReference>
<dbReference type="PaxDb" id="9544-ENSMMUP00000031381"/>
<dbReference type="eggNOG" id="KOG4767">
    <property type="taxonomic scope" value="Eukaryota"/>
</dbReference>
<dbReference type="InParanoid" id="P98038"/>
<dbReference type="Proteomes" id="UP000006718">
    <property type="component" value="Mitochondrion"/>
</dbReference>
<dbReference type="GO" id="GO:0005743">
    <property type="term" value="C:mitochondrial inner membrane"/>
    <property type="evidence" value="ECO:0007669"/>
    <property type="project" value="UniProtKB-SubCell"/>
</dbReference>
<dbReference type="GO" id="GO:0005739">
    <property type="term" value="C:mitochondrion"/>
    <property type="evidence" value="ECO:0000250"/>
    <property type="project" value="UniProtKB"/>
</dbReference>
<dbReference type="GO" id="GO:0045277">
    <property type="term" value="C:respiratory chain complex IV"/>
    <property type="evidence" value="ECO:0000250"/>
    <property type="project" value="UniProtKB"/>
</dbReference>
<dbReference type="GO" id="GO:0005507">
    <property type="term" value="F:copper ion binding"/>
    <property type="evidence" value="ECO:0007669"/>
    <property type="project" value="InterPro"/>
</dbReference>
<dbReference type="GO" id="GO:0004129">
    <property type="term" value="F:cytochrome-c oxidase activity"/>
    <property type="evidence" value="ECO:0007669"/>
    <property type="project" value="UniProtKB-EC"/>
</dbReference>
<dbReference type="GO" id="GO:0042773">
    <property type="term" value="P:ATP synthesis coupled electron transport"/>
    <property type="evidence" value="ECO:0000318"/>
    <property type="project" value="GO_Central"/>
</dbReference>
<dbReference type="CDD" id="cd13912">
    <property type="entry name" value="CcO_II_C"/>
    <property type="match status" value="1"/>
</dbReference>
<dbReference type="FunFam" id="1.10.287.90:FF:000001">
    <property type="entry name" value="Cytochrome c oxidase subunit 2"/>
    <property type="match status" value="1"/>
</dbReference>
<dbReference type="FunFam" id="2.60.40.420:FF:000001">
    <property type="entry name" value="Cytochrome c oxidase subunit 2"/>
    <property type="match status" value="1"/>
</dbReference>
<dbReference type="Gene3D" id="1.10.287.90">
    <property type="match status" value="1"/>
</dbReference>
<dbReference type="Gene3D" id="2.60.40.420">
    <property type="entry name" value="Cupredoxins - blue copper proteins"/>
    <property type="match status" value="1"/>
</dbReference>
<dbReference type="InterPro" id="IPR045187">
    <property type="entry name" value="CcO_II"/>
</dbReference>
<dbReference type="InterPro" id="IPR002429">
    <property type="entry name" value="CcO_II-like_C"/>
</dbReference>
<dbReference type="InterPro" id="IPR034210">
    <property type="entry name" value="CcO_II_C"/>
</dbReference>
<dbReference type="InterPro" id="IPR001505">
    <property type="entry name" value="Copper_CuA"/>
</dbReference>
<dbReference type="InterPro" id="IPR008972">
    <property type="entry name" value="Cupredoxin"/>
</dbReference>
<dbReference type="InterPro" id="IPR014222">
    <property type="entry name" value="Cyt_c_oxidase_su2"/>
</dbReference>
<dbReference type="InterPro" id="IPR011759">
    <property type="entry name" value="Cyt_c_oxidase_su2_TM_dom"/>
</dbReference>
<dbReference type="InterPro" id="IPR036257">
    <property type="entry name" value="Cyt_c_oxidase_su2_TM_sf"/>
</dbReference>
<dbReference type="NCBIfam" id="TIGR02866">
    <property type="entry name" value="CoxB"/>
    <property type="match status" value="1"/>
</dbReference>
<dbReference type="PANTHER" id="PTHR22888:SF9">
    <property type="entry name" value="CYTOCHROME C OXIDASE SUBUNIT 2"/>
    <property type="match status" value="1"/>
</dbReference>
<dbReference type="PANTHER" id="PTHR22888">
    <property type="entry name" value="CYTOCHROME C OXIDASE, SUBUNIT II"/>
    <property type="match status" value="1"/>
</dbReference>
<dbReference type="Pfam" id="PF00116">
    <property type="entry name" value="COX2"/>
    <property type="match status" value="1"/>
</dbReference>
<dbReference type="Pfam" id="PF02790">
    <property type="entry name" value="COX2_TM"/>
    <property type="match status" value="1"/>
</dbReference>
<dbReference type="PRINTS" id="PR01166">
    <property type="entry name" value="CYCOXIDASEII"/>
</dbReference>
<dbReference type="SUPFAM" id="SSF49503">
    <property type="entry name" value="Cupredoxins"/>
    <property type="match status" value="1"/>
</dbReference>
<dbReference type="SUPFAM" id="SSF81464">
    <property type="entry name" value="Cytochrome c oxidase subunit II-like, transmembrane region"/>
    <property type="match status" value="1"/>
</dbReference>
<dbReference type="PROSITE" id="PS00078">
    <property type="entry name" value="COX2"/>
    <property type="match status" value="1"/>
</dbReference>
<dbReference type="PROSITE" id="PS50857">
    <property type="entry name" value="COX2_CUA"/>
    <property type="match status" value="1"/>
</dbReference>
<dbReference type="PROSITE" id="PS50999">
    <property type="entry name" value="COX2_TM"/>
    <property type="match status" value="1"/>
</dbReference>
<keyword id="KW-0186">Copper</keyword>
<keyword id="KW-0249">Electron transport</keyword>
<keyword id="KW-0460">Magnesium</keyword>
<keyword id="KW-0472">Membrane</keyword>
<keyword id="KW-0479">Metal-binding</keyword>
<keyword id="KW-0496">Mitochondrion</keyword>
<keyword id="KW-0999">Mitochondrion inner membrane</keyword>
<keyword id="KW-1185">Reference proteome</keyword>
<keyword id="KW-0679">Respiratory chain</keyword>
<keyword id="KW-1278">Translocase</keyword>
<keyword id="KW-0812">Transmembrane</keyword>
<keyword id="KW-1133">Transmembrane helix</keyword>
<keyword id="KW-0813">Transport</keyword>
<protein>
    <recommendedName>
        <fullName>Cytochrome c oxidase subunit 2</fullName>
        <ecNumber>7.1.1.9</ecNumber>
    </recommendedName>
    <alternativeName>
        <fullName>Cytochrome c oxidase polypeptide II</fullName>
    </alternativeName>
</protein>
<name>COX2_MACMU</name>
<organism>
    <name type="scientific">Macaca mulatta</name>
    <name type="common">Rhesus macaque</name>
    <dbReference type="NCBI Taxonomy" id="9544"/>
    <lineage>
        <taxon>Eukaryota</taxon>
        <taxon>Metazoa</taxon>
        <taxon>Chordata</taxon>
        <taxon>Craniata</taxon>
        <taxon>Vertebrata</taxon>
        <taxon>Euteleostomi</taxon>
        <taxon>Mammalia</taxon>
        <taxon>Eutheria</taxon>
        <taxon>Euarchontoglires</taxon>
        <taxon>Primates</taxon>
        <taxon>Haplorrhini</taxon>
        <taxon>Catarrhini</taxon>
        <taxon>Cercopithecidae</taxon>
        <taxon>Cercopithecinae</taxon>
        <taxon>Macaca</taxon>
    </lineage>
</organism>
<evidence type="ECO:0000250" key="1">
    <source>
        <dbReference type="UniProtKB" id="P00403"/>
    </source>
</evidence>
<evidence type="ECO:0000250" key="2">
    <source>
        <dbReference type="UniProtKB" id="P00410"/>
    </source>
</evidence>
<evidence type="ECO:0000250" key="3">
    <source>
        <dbReference type="UniProtKB" id="P68530"/>
    </source>
</evidence>
<evidence type="ECO:0000305" key="4"/>
<comment type="function">
    <text evidence="2">Component of the cytochrome c oxidase, the last enzyme in the mitochondrial electron transport chain which drives oxidative phosphorylation. The respiratory chain contains 3 multisubunit complexes succinate dehydrogenase (complex II, CII), ubiquinol-cytochrome c oxidoreductase (cytochrome b-c1 complex, complex III, CIII) and cytochrome c oxidase (complex IV, CIV), that cooperate to transfer electrons derived from NADH and succinate to molecular oxygen, creating an electrochemical gradient over the inner membrane that drives transmembrane transport and the ATP synthase. Cytochrome c oxidase is the component of the respiratory chain that catalyzes the reduction of oxygen to water. Electrons originating from reduced cytochrome c in the intermembrane space (IMS) are transferred via the dinuclear copper A center (CU(A)) of subunit 2 and heme A of subunit 1 to the active site in subunit 1, a binuclear center (BNC) formed by heme A3 and copper B (CU(B)). The BNC reduces molecular oxygen to 2 water molecules using 4 electrons from cytochrome c in the IMS and 4 protons from the mitochondrial matrix.</text>
</comment>
<comment type="catalytic activity">
    <reaction evidence="2">
        <text>4 Fe(II)-[cytochrome c] + O2 + 8 H(+)(in) = 4 Fe(III)-[cytochrome c] + 2 H2O + 4 H(+)(out)</text>
        <dbReference type="Rhea" id="RHEA:11436"/>
        <dbReference type="Rhea" id="RHEA-COMP:10350"/>
        <dbReference type="Rhea" id="RHEA-COMP:14399"/>
        <dbReference type="ChEBI" id="CHEBI:15377"/>
        <dbReference type="ChEBI" id="CHEBI:15378"/>
        <dbReference type="ChEBI" id="CHEBI:15379"/>
        <dbReference type="ChEBI" id="CHEBI:29033"/>
        <dbReference type="ChEBI" id="CHEBI:29034"/>
        <dbReference type="EC" id="7.1.1.9"/>
    </reaction>
    <physiologicalReaction direction="left-to-right" evidence="2">
        <dbReference type="Rhea" id="RHEA:11437"/>
    </physiologicalReaction>
</comment>
<comment type="cofactor">
    <cofactor evidence="3">
        <name>Cu cation</name>
        <dbReference type="ChEBI" id="CHEBI:23378"/>
    </cofactor>
    <text evidence="3">Binds a dinuclear copper A center per subunit.</text>
</comment>
<comment type="subunit">
    <text evidence="1 3">Component of the cytochrome c oxidase (complex IV, CIV), a multisubunit enzyme composed of 14 subunits. The complex is composed of a catalytic core of 3 subunits MT-CO1, MT-CO2 and MT-CO3, encoded in the mitochondrial DNA, and 11 supernumerary subunits COX4I, COX5A, COX5B, COX6A, COX6B, COX6C, COX7A, COX7B, COX7C, COX8 and NDUFA4, which are encoded in the nuclear genome. The complex exists as a monomer or a dimer and forms supercomplexes (SCs) in the inner mitochondrial membrane with NADH-ubiquinone oxidoreductase (complex I, CI) and ubiquinol-cytochrome c oxidoreductase (cytochrome b-c1 complex, complex III, CIII), resulting in different assemblies (supercomplex SCI(1)III(2)IV(1) and megacomplex MCI(2)III(2)IV(2)) (By similarity). Found in a complex with TMEM177, COA6, COX18, COX20, SCO1 and SCO2. Interacts with TMEM177 in a COX20-dependent manner. Interacts with COX20. Interacts with COX16 (By similarity).</text>
</comment>
<comment type="subcellular location">
    <subcellularLocation>
        <location evidence="3">Mitochondrion inner membrane</location>
        <topology evidence="3">Multi-pass membrane protein</topology>
    </subcellularLocation>
</comment>
<comment type="similarity">
    <text evidence="4">Belongs to the cytochrome c oxidase subunit 2 family.</text>
</comment>
<accession>P98038</accession>
<sequence>MAHPVQLSLQDATSPVMEELITFHDHAFMAMSLISFLVLYALLSTLTTKLTNTSITDAQEMETIWTILPAIILILIALPSLRILYLTDEVNDPSFTIKSIGHQWYWTYEYTDYGGLIFNSYMLPPLFLNPGDLRLLEVDNRVVLPIEAPVRMMITSQDVLHSWTIPTLGLKTDAVPGRLNQTVFTATRPGVYYGQCSEICGANHSFMPIVAELIPLKIFEMGPVLTL</sequence>